<comment type="catalytic activity">
    <reaction>
        <text>Endohydrolysis of (1-&gt;4)-beta-D-glucosidic linkages in cellulose, lichenin and cereal beta-D-glucans.</text>
        <dbReference type="EC" id="3.2.1.4"/>
    </reaction>
</comment>
<comment type="subcellular location">
    <subcellularLocation>
        <location evidence="1">Secreted</location>
    </subcellularLocation>
</comment>
<comment type="similarity">
    <text evidence="4 5">Belongs to the glycosyl hydrolase 9 (cellulase E) family.</text>
</comment>
<protein>
    <recommendedName>
        <fullName>Endoglucanase 24</fullName>
        <ecNumber>3.2.1.4</ecNumber>
    </recommendedName>
    <alternativeName>
        <fullName>Endo-1,4-beta glucanase 24</fullName>
    </alternativeName>
</protein>
<feature type="signal peptide" evidence="2">
    <location>
        <begin position="1"/>
        <end position="24"/>
    </location>
</feature>
<feature type="chain" id="PRO_0000249301" description="Endoglucanase 24">
    <location>
        <begin position="25"/>
        <end position="528"/>
    </location>
</feature>
<feature type="active site" description="Nucleophile" evidence="4">
    <location>
        <position position="109"/>
    </location>
</feature>
<feature type="active site" evidence="3">
    <location>
        <position position="446"/>
    </location>
</feature>
<feature type="active site" evidence="1">
    <location>
        <position position="492"/>
    </location>
</feature>
<feature type="active site" evidence="1">
    <location>
        <position position="501"/>
    </location>
</feature>
<feature type="glycosylation site" description="N-linked (GlcNAc...) asparagine" evidence="2">
    <location>
        <position position="259"/>
    </location>
</feature>
<feature type="glycosylation site" description="N-linked (GlcNAc...) asparagine" evidence="2">
    <location>
        <position position="487"/>
    </location>
</feature>
<evidence type="ECO:0000250" key="1"/>
<evidence type="ECO:0000255" key="2"/>
<evidence type="ECO:0000255" key="3">
    <source>
        <dbReference type="PROSITE-ProRule" id="PRU10059"/>
    </source>
</evidence>
<evidence type="ECO:0000255" key="4">
    <source>
        <dbReference type="PROSITE-ProRule" id="PRU10140"/>
    </source>
</evidence>
<evidence type="ECO:0000305" key="5"/>
<gene>
    <name type="ordered locus">Os09g0533900</name>
    <name type="ordered locus">LOC_Os09g36350</name>
    <name type="ORF">OJ1112_E07.17-1</name>
</gene>
<reference key="1">
    <citation type="journal article" date="2005" name="Nature">
        <title>The map-based sequence of the rice genome.</title>
        <authorList>
            <consortium name="International rice genome sequencing project (IRGSP)"/>
        </authorList>
    </citation>
    <scope>NUCLEOTIDE SEQUENCE [LARGE SCALE GENOMIC DNA]</scope>
    <source>
        <strain>cv. Nipponbare</strain>
    </source>
</reference>
<reference key="2">
    <citation type="journal article" date="2008" name="Nucleic Acids Res.">
        <title>The rice annotation project database (RAP-DB): 2008 update.</title>
        <authorList>
            <consortium name="The rice annotation project (RAP)"/>
        </authorList>
    </citation>
    <scope>GENOME REANNOTATION</scope>
    <source>
        <strain>cv. Nipponbare</strain>
    </source>
</reference>
<reference key="3">
    <citation type="journal article" date="2013" name="Rice">
        <title>Improvement of the Oryza sativa Nipponbare reference genome using next generation sequence and optical map data.</title>
        <authorList>
            <person name="Kawahara Y."/>
            <person name="de la Bastide M."/>
            <person name="Hamilton J.P."/>
            <person name="Kanamori H."/>
            <person name="McCombie W.R."/>
            <person name="Ouyang S."/>
            <person name="Schwartz D.C."/>
            <person name="Tanaka T."/>
            <person name="Wu J."/>
            <person name="Zhou S."/>
            <person name="Childs K.L."/>
            <person name="Davidson R.M."/>
            <person name="Lin H."/>
            <person name="Quesada-Ocampo L."/>
            <person name="Vaillancourt B."/>
            <person name="Sakai H."/>
            <person name="Lee S.S."/>
            <person name="Kim J."/>
            <person name="Numa H."/>
            <person name="Itoh T."/>
            <person name="Buell C.R."/>
            <person name="Matsumoto T."/>
        </authorList>
    </citation>
    <scope>GENOME REANNOTATION</scope>
    <source>
        <strain>cv. Nipponbare</strain>
    </source>
</reference>
<reference key="4">
    <citation type="journal article" date="2003" name="Science">
        <title>Collection, mapping, and annotation of over 28,000 cDNA clones from japonica rice.</title>
        <authorList>
            <consortium name="The rice full-length cDNA consortium"/>
        </authorList>
    </citation>
    <scope>NUCLEOTIDE SEQUENCE [LARGE SCALE MRNA]</scope>
    <source>
        <strain>cv. Nipponbare</strain>
    </source>
</reference>
<organism>
    <name type="scientific">Oryza sativa subsp. japonica</name>
    <name type="common">Rice</name>
    <dbReference type="NCBI Taxonomy" id="39947"/>
    <lineage>
        <taxon>Eukaryota</taxon>
        <taxon>Viridiplantae</taxon>
        <taxon>Streptophyta</taxon>
        <taxon>Embryophyta</taxon>
        <taxon>Tracheophyta</taxon>
        <taxon>Spermatophyta</taxon>
        <taxon>Magnoliopsida</taxon>
        <taxon>Liliopsida</taxon>
        <taxon>Poales</taxon>
        <taxon>Poaceae</taxon>
        <taxon>BOP clade</taxon>
        <taxon>Oryzoideae</taxon>
        <taxon>Oryzeae</taxon>
        <taxon>Oryzinae</taxon>
        <taxon>Oryza</taxon>
        <taxon>Oryza sativa</taxon>
    </lineage>
</organism>
<accession>Q69SG5</accession>
<accession>A0A0P0XQY5</accession>
<accession>Q0J030</accession>
<keyword id="KW-0119">Carbohydrate metabolism</keyword>
<keyword id="KW-0961">Cell wall biogenesis/degradation</keyword>
<keyword id="KW-0136">Cellulose degradation</keyword>
<keyword id="KW-0325">Glycoprotein</keyword>
<keyword id="KW-0326">Glycosidase</keyword>
<keyword id="KW-0378">Hydrolase</keyword>
<keyword id="KW-0624">Polysaccharide degradation</keyword>
<keyword id="KW-1185">Reference proteome</keyword>
<keyword id="KW-0964">Secreted</keyword>
<keyword id="KW-0732">Signal</keyword>
<proteinExistence type="evidence at transcript level"/>
<dbReference type="EC" id="3.2.1.4"/>
<dbReference type="EMBL" id="AP005092">
    <property type="protein sequence ID" value="BAD33331.1"/>
    <property type="molecule type" value="Genomic_DNA"/>
</dbReference>
<dbReference type="EMBL" id="AP008215">
    <property type="protein sequence ID" value="BAF25685.1"/>
    <property type="molecule type" value="Genomic_DNA"/>
</dbReference>
<dbReference type="EMBL" id="AP014965">
    <property type="protein sequence ID" value="BAT09128.1"/>
    <property type="molecule type" value="Genomic_DNA"/>
</dbReference>
<dbReference type="EMBL" id="AK100449">
    <property type="protein sequence ID" value="BAG94612.1"/>
    <property type="molecule type" value="mRNA"/>
</dbReference>
<dbReference type="RefSeq" id="XP_015612534.1">
    <property type="nucleotide sequence ID" value="XM_015757048.1"/>
</dbReference>
<dbReference type="SMR" id="Q69SG5"/>
<dbReference type="FunCoup" id="Q69SG5">
    <property type="interactions" value="37"/>
</dbReference>
<dbReference type="STRING" id="39947.Q69SG5"/>
<dbReference type="CAZy" id="GH9">
    <property type="family name" value="Glycoside Hydrolase Family 9"/>
</dbReference>
<dbReference type="PaxDb" id="39947-Q69SG5"/>
<dbReference type="EnsemblPlants" id="Os09t0533900-01">
    <property type="protein sequence ID" value="Os09t0533900-01"/>
    <property type="gene ID" value="Os09g0533900"/>
</dbReference>
<dbReference type="EnsemblPlants" id="Os09t0533900-02">
    <property type="protein sequence ID" value="Os09t0533900-02"/>
    <property type="gene ID" value="Os09g0533900"/>
</dbReference>
<dbReference type="Gramene" id="Os09t0533900-01">
    <property type="protein sequence ID" value="Os09t0533900-01"/>
    <property type="gene ID" value="Os09g0533900"/>
</dbReference>
<dbReference type="Gramene" id="Os09t0533900-02">
    <property type="protein sequence ID" value="Os09t0533900-02"/>
    <property type="gene ID" value="Os09g0533900"/>
</dbReference>
<dbReference type="KEGG" id="dosa:Os09g0533900"/>
<dbReference type="eggNOG" id="ENOG502QQZQ">
    <property type="taxonomic scope" value="Eukaryota"/>
</dbReference>
<dbReference type="HOGENOM" id="CLU_008926_1_4_1"/>
<dbReference type="InParanoid" id="Q69SG5"/>
<dbReference type="OMA" id="SKGWIWW"/>
<dbReference type="OrthoDB" id="10257085at2759"/>
<dbReference type="Proteomes" id="UP000000763">
    <property type="component" value="Chromosome 9"/>
</dbReference>
<dbReference type="Proteomes" id="UP000059680">
    <property type="component" value="Chromosome 9"/>
</dbReference>
<dbReference type="ExpressionAtlas" id="Q69SG5">
    <property type="expression patterns" value="baseline and differential"/>
</dbReference>
<dbReference type="GO" id="GO:0005576">
    <property type="term" value="C:extracellular region"/>
    <property type="evidence" value="ECO:0007669"/>
    <property type="project" value="UniProtKB-SubCell"/>
</dbReference>
<dbReference type="GO" id="GO:0008810">
    <property type="term" value="F:cellulase activity"/>
    <property type="evidence" value="ECO:0007669"/>
    <property type="project" value="UniProtKB-EC"/>
</dbReference>
<dbReference type="GO" id="GO:0071555">
    <property type="term" value="P:cell wall organization"/>
    <property type="evidence" value="ECO:0007669"/>
    <property type="project" value="UniProtKB-KW"/>
</dbReference>
<dbReference type="GO" id="GO:0030245">
    <property type="term" value="P:cellulose catabolic process"/>
    <property type="evidence" value="ECO:0007669"/>
    <property type="project" value="UniProtKB-KW"/>
</dbReference>
<dbReference type="FunFam" id="1.50.10.10:FF:000020">
    <property type="entry name" value="Endoglucanase"/>
    <property type="match status" value="1"/>
</dbReference>
<dbReference type="Gene3D" id="1.50.10.10">
    <property type="match status" value="1"/>
</dbReference>
<dbReference type="InterPro" id="IPR008928">
    <property type="entry name" value="6-hairpin_glycosidase_sf"/>
</dbReference>
<dbReference type="InterPro" id="IPR012341">
    <property type="entry name" value="6hp_glycosidase-like_sf"/>
</dbReference>
<dbReference type="InterPro" id="IPR001701">
    <property type="entry name" value="Glyco_hydro_9"/>
</dbReference>
<dbReference type="InterPro" id="IPR018221">
    <property type="entry name" value="Glyco_hydro_9_His_AS"/>
</dbReference>
<dbReference type="PANTHER" id="PTHR22298">
    <property type="entry name" value="ENDO-1,4-BETA-GLUCANASE"/>
    <property type="match status" value="1"/>
</dbReference>
<dbReference type="Pfam" id="PF00759">
    <property type="entry name" value="Glyco_hydro_9"/>
    <property type="match status" value="1"/>
</dbReference>
<dbReference type="SUPFAM" id="SSF48208">
    <property type="entry name" value="Six-hairpin glycosidases"/>
    <property type="match status" value="1"/>
</dbReference>
<dbReference type="PROSITE" id="PS60032">
    <property type="entry name" value="GH9_1"/>
    <property type="match status" value="1"/>
</dbReference>
<dbReference type="PROSITE" id="PS00592">
    <property type="entry name" value="GH9_2"/>
    <property type="match status" value="1"/>
</dbReference>
<name>GUN24_ORYSJ</name>
<sequence>MGSKTKGCCGWLIVALVASLVATAAVVAIMKKKVGGGSGRKLKPLPVPGPPGAIDSKYGDALGVALQFFQVQKAGKLENNQIPWRGDSALDDGKPAGLDLSKGMYDAGDHIKFSFPMAFTATVLSWSILEYGDQMSATKQLDPALDALRWITDFLVNAHPSDNVFYIQVGDPDLDHNCWERPETMSEKRPLTQINTKSPGSDVAAEAAAAMASASIVFKSRDTTYSDSLLQHAQKLFTFADTYKGLASDTYPKLQNYYNSTGYQDELLWAASWLYHATGDQTYLSYVTVENGKAFADWGRPTWFSWDDKLAGTQVLLSRLNFFGSKQTSNAENMGLKMYRDTAEAVICGLLPDSPSATASRTGGGLVWISGWNSLQHATNAAFLAVVYSDYMLTSQTAAVQCSGKYYSPTDIRNFAISQANYILGDNPMKLSYLVGYGSSYPQQVHHRGASIPADAKTGCKGFQYLHSTSPNPNVAMGALVGGPFQNDTFVDSRDNAVQTESSTYNSGTLVGLLSGLVTTSSVAQSFT</sequence>